<comment type="function">
    <text evidence="1">Mechanosensitive channel that opens in response to stretch forces in the membrane lipid bilayer.</text>
</comment>
<comment type="subcellular location">
    <subcellularLocation>
        <location evidence="5">Membrane</location>
        <topology evidence="5">Multi-pass membrane protein</topology>
    </subcellularLocation>
</comment>
<comment type="similarity">
    <text evidence="5">Belongs to the MscS (TC 1.A.23) family.</text>
</comment>
<accession>Q9SYM1</accession>
<dbReference type="EMBL" id="AC007260">
    <property type="protein sequence ID" value="AAD30575.1"/>
    <property type="molecule type" value="Genomic_DNA"/>
</dbReference>
<dbReference type="EMBL" id="CP002684">
    <property type="protein sequence ID" value="AEE36127.1"/>
    <property type="molecule type" value="Genomic_DNA"/>
</dbReference>
<dbReference type="EMBL" id="BX813849">
    <property type="status" value="NOT_ANNOTATED_CDS"/>
    <property type="molecule type" value="mRNA"/>
</dbReference>
<dbReference type="PIR" id="G96814">
    <property type="entry name" value="G96814"/>
</dbReference>
<dbReference type="RefSeq" id="NP_177982.1">
    <property type="nucleotide sequence ID" value="NM_106508.3"/>
</dbReference>
<dbReference type="SMR" id="Q9SYM1"/>
<dbReference type="BioGRID" id="29416">
    <property type="interactions" value="2"/>
</dbReference>
<dbReference type="FunCoup" id="Q9SYM1">
    <property type="interactions" value="307"/>
</dbReference>
<dbReference type="STRING" id="3702.Q9SYM1"/>
<dbReference type="iPTMnet" id="Q9SYM1"/>
<dbReference type="PaxDb" id="3702-AT1G78610.1"/>
<dbReference type="ProteomicsDB" id="239006"/>
<dbReference type="EnsemblPlants" id="AT1G78610.1">
    <property type="protein sequence ID" value="AT1G78610.1"/>
    <property type="gene ID" value="AT1G78610"/>
</dbReference>
<dbReference type="GeneID" id="844197"/>
<dbReference type="Gramene" id="AT1G78610.1">
    <property type="protein sequence ID" value="AT1G78610.1"/>
    <property type="gene ID" value="AT1G78610"/>
</dbReference>
<dbReference type="KEGG" id="ath:AT1G78610"/>
<dbReference type="Araport" id="AT1G78610"/>
<dbReference type="TAIR" id="AT1G78610">
    <property type="gene designation" value="MSL6"/>
</dbReference>
<dbReference type="eggNOG" id="KOG4629">
    <property type="taxonomic scope" value="Eukaryota"/>
</dbReference>
<dbReference type="HOGENOM" id="CLU_013552_0_0_1"/>
<dbReference type="InParanoid" id="Q9SYM1"/>
<dbReference type="OMA" id="DSRKNEG"/>
<dbReference type="OrthoDB" id="544685at2759"/>
<dbReference type="PhylomeDB" id="Q9SYM1"/>
<dbReference type="PRO" id="PR:Q9SYM1"/>
<dbReference type="Proteomes" id="UP000006548">
    <property type="component" value="Chromosome 1"/>
</dbReference>
<dbReference type="ExpressionAtlas" id="Q9SYM1">
    <property type="expression patterns" value="baseline and differential"/>
</dbReference>
<dbReference type="GO" id="GO:0000325">
    <property type="term" value="C:plant-type vacuole"/>
    <property type="evidence" value="ECO:0007005"/>
    <property type="project" value="TAIR"/>
</dbReference>
<dbReference type="GO" id="GO:0005886">
    <property type="term" value="C:plasma membrane"/>
    <property type="evidence" value="ECO:0007005"/>
    <property type="project" value="TAIR"/>
</dbReference>
<dbReference type="GO" id="GO:0009506">
    <property type="term" value="C:plasmodesma"/>
    <property type="evidence" value="ECO:0007005"/>
    <property type="project" value="TAIR"/>
</dbReference>
<dbReference type="GO" id="GO:0034220">
    <property type="term" value="P:monoatomic ion transmembrane transport"/>
    <property type="evidence" value="ECO:0007669"/>
    <property type="project" value="UniProtKB-KW"/>
</dbReference>
<dbReference type="FunFam" id="2.30.30.60:FF:000003">
    <property type="entry name" value="Predicted mechanosensitive ion channel"/>
    <property type="match status" value="1"/>
</dbReference>
<dbReference type="Gene3D" id="2.30.30.60">
    <property type="match status" value="1"/>
</dbReference>
<dbReference type="InterPro" id="IPR010920">
    <property type="entry name" value="LSM_dom_sf"/>
</dbReference>
<dbReference type="InterPro" id="IPR016688">
    <property type="entry name" value="MscS-like_plants/fungi"/>
</dbReference>
<dbReference type="InterPro" id="IPR023408">
    <property type="entry name" value="MscS_beta-dom_sf"/>
</dbReference>
<dbReference type="InterPro" id="IPR006685">
    <property type="entry name" value="MscS_channel_2nd"/>
</dbReference>
<dbReference type="PANTHER" id="PTHR31618:SF1">
    <property type="entry name" value="EF-HAND DOMAIN-CONTAINING PROTEIN"/>
    <property type="match status" value="1"/>
</dbReference>
<dbReference type="PANTHER" id="PTHR31618">
    <property type="entry name" value="MECHANOSENSITIVE ION CHANNEL PROTEIN 5"/>
    <property type="match status" value="1"/>
</dbReference>
<dbReference type="Pfam" id="PF00924">
    <property type="entry name" value="MS_channel_2nd"/>
    <property type="match status" value="1"/>
</dbReference>
<dbReference type="PIRSF" id="PIRSF017209">
    <property type="entry name" value="Memb_At2g17000_prd"/>
    <property type="match status" value="1"/>
</dbReference>
<dbReference type="SUPFAM" id="SSF50182">
    <property type="entry name" value="Sm-like ribonucleoproteins"/>
    <property type="match status" value="1"/>
</dbReference>
<protein>
    <recommendedName>
        <fullName>Mechanosensitive ion channel protein 6</fullName>
    </recommendedName>
    <alternativeName>
        <fullName>Mechanosensitive channel of small conductance-like 6</fullName>
    </alternativeName>
    <alternativeName>
        <fullName>MscS-Like protein 6</fullName>
    </alternativeName>
</protein>
<keyword id="KW-0407">Ion channel</keyword>
<keyword id="KW-0406">Ion transport</keyword>
<keyword id="KW-0472">Membrane</keyword>
<keyword id="KW-0597">Phosphoprotein</keyword>
<keyword id="KW-1185">Reference proteome</keyword>
<keyword id="KW-0812">Transmembrane</keyword>
<keyword id="KW-1133">Transmembrane helix</keyword>
<keyword id="KW-0813">Transport</keyword>
<gene>
    <name type="primary">MSL6</name>
    <name type="ordered locus">At1g78610</name>
    <name type="ORF">T30F21.6</name>
</gene>
<feature type="chain" id="PRO_0000305186" description="Mechanosensitive ion channel protein 6">
    <location>
        <begin position="1"/>
        <end position="856"/>
    </location>
</feature>
<feature type="transmembrane region" description="Helical" evidence="3">
    <location>
        <begin position="242"/>
        <end position="262"/>
    </location>
</feature>
<feature type="transmembrane region" description="Helical" evidence="3">
    <location>
        <begin position="283"/>
        <end position="303"/>
    </location>
</feature>
<feature type="transmembrane region" description="Helical" evidence="3">
    <location>
        <begin position="323"/>
        <end position="343"/>
    </location>
</feature>
<feature type="transmembrane region" description="Helical" evidence="3">
    <location>
        <begin position="360"/>
        <end position="380"/>
    </location>
</feature>
<feature type="transmembrane region" description="Helical" evidence="3">
    <location>
        <begin position="615"/>
        <end position="635"/>
    </location>
</feature>
<feature type="transmembrane region" description="Helical" evidence="3">
    <location>
        <begin position="651"/>
        <end position="671"/>
    </location>
</feature>
<feature type="region of interest" description="Disordered" evidence="4">
    <location>
        <begin position="45"/>
        <end position="86"/>
    </location>
</feature>
<feature type="region of interest" description="Disordered" evidence="4">
    <location>
        <begin position="116"/>
        <end position="226"/>
    </location>
</feature>
<feature type="compositionally biased region" description="Basic and acidic residues" evidence="4">
    <location>
        <begin position="70"/>
        <end position="85"/>
    </location>
</feature>
<feature type="compositionally biased region" description="Basic and acidic residues" evidence="4">
    <location>
        <begin position="129"/>
        <end position="140"/>
    </location>
</feature>
<feature type="compositionally biased region" description="Polar residues" evidence="4">
    <location>
        <begin position="155"/>
        <end position="168"/>
    </location>
</feature>
<feature type="compositionally biased region" description="Acidic residues" evidence="4">
    <location>
        <begin position="217"/>
        <end position="226"/>
    </location>
</feature>
<feature type="modified residue" description="Phosphoserine" evidence="2">
    <location>
        <position position="211"/>
    </location>
</feature>
<feature type="modified residue" description="Phosphoserine" evidence="6">
    <location>
        <position position="462"/>
    </location>
</feature>
<feature type="sequence conflict" description="In Ref. 3; BX813849." evidence="5" ref="3">
    <original>A</original>
    <variation>T</variation>
    <location>
        <position position="850"/>
    </location>
</feature>
<evidence type="ECO:0000250" key="1"/>
<evidence type="ECO:0000250" key="2">
    <source>
        <dbReference type="UniProtKB" id="Q9LYG9"/>
    </source>
</evidence>
<evidence type="ECO:0000255" key="3"/>
<evidence type="ECO:0000256" key="4">
    <source>
        <dbReference type="SAM" id="MobiDB-lite"/>
    </source>
</evidence>
<evidence type="ECO:0000305" key="5"/>
<evidence type="ECO:0007744" key="6">
    <source>
    </source>
</evidence>
<proteinExistence type="evidence at protein level"/>
<organism>
    <name type="scientific">Arabidopsis thaliana</name>
    <name type="common">Mouse-ear cress</name>
    <dbReference type="NCBI Taxonomy" id="3702"/>
    <lineage>
        <taxon>Eukaryota</taxon>
        <taxon>Viridiplantae</taxon>
        <taxon>Streptophyta</taxon>
        <taxon>Embryophyta</taxon>
        <taxon>Tracheophyta</taxon>
        <taxon>Spermatophyta</taxon>
        <taxon>Magnoliopsida</taxon>
        <taxon>eudicotyledons</taxon>
        <taxon>Gunneridae</taxon>
        <taxon>Pentapetalae</taxon>
        <taxon>rosids</taxon>
        <taxon>malvids</taxon>
        <taxon>Brassicales</taxon>
        <taxon>Brassicaceae</taxon>
        <taxon>Camelineae</taxon>
        <taxon>Arabidopsis</taxon>
    </lineage>
</organism>
<name>MSL6_ARATH</name>
<sequence length="856" mass="96604">MAVDAADRREVIVKIDGENGNNNGVSGETVGKIWRDGSYDFWTDGEGNLNKGHNAAAVDSDRSAATTGEQQKDEGFEFRRGEDPPTKLIGQFLHKQQASGEICLDMDLGMDELQSRGLTPVSESPRVSTKRDPVGRRDSRSNTNNNDDGEVVKCSGNNAPIQRSSSTLLKMRTRSRLSDPPTPQLPPQTADMKSGRIPKSGQMKSGFFGKSPKTQGEEEEDDPFAAEDLPEEYRKDKLSLWIVLEWLSLILIIAGFVCTLAIPSLRKKKLWELQLWKWESMVLVLICGRLVSSWIVKIVVFFIERNFLLRKRVLYFVYGVRKAVQNCLWLGLVLLAWHFLFDEKVAKAANTKALRVVTKIFVCLLVGFLLWLVKTLLVKVLASSFHMSTYFDRIQESLFTQYVIETLSGPPLIEIQKNEEEEERISVEVKKFQNPGGVEIQSGAQKSPMKTGKSPFLSHVLSNGGGGGGENKGITIDSLHKLNPKNVSAWKMKRLMNIIRNGSLTTLDEQLQDPSLDDDKGNQIRSEFEAKLAARKIFHNVAKPGSKFIYANDIMRFLPDDEALKTLSLFEGASETNRISKSSLKNWVVNAFRERRALALTLNDTKTAVNRLHKMVNIVVGIIILVIWLIILGITSTKFLVVMSSQVVVVAFIFGNMCKIVFESIIYLFVIHPFDVGDRCEIDGVQMVVEEMNILTTVFLRFDNQKVVYPNSLLWTKSIGNYYRSPDMGDGIEFSIHITTPAEKIILIKQRITSYIEGKKDHWYPAPMIVFKDMESLNSVRIAVWPTHRMNHQDMGEKWARRSQLVEEIAKICRELDIEYRLYPLDINVRNLPTSTALPVSDRLPPNWSAPASGSN</sequence>
<reference key="1">
    <citation type="journal article" date="2000" name="Nature">
        <title>Sequence and analysis of chromosome 1 of the plant Arabidopsis thaliana.</title>
        <authorList>
            <person name="Theologis A."/>
            <person name="Ecker J.R."/>
            <person name="Palm C.J."/>
            <person name="Federspiel N.A."/>
            <person name="Kaul S."/>
            <person name="White O."/>
            <person name="Alonso J."/>
            <person name="Altafi H."/>
            <person name="Araujo R."/>
            <person name="Bowman C.L."/>
            <person name="Brooks S.Y."/>
            <person name="Buehler E."/>
            <person name="Chan A."/>
            <person name="Chao Q."/>
            <person name="Chen H."/>
            <person name="Cheuk R.F."/>
            <person name="Chin C.W."/>
            <person name="Chung M.K."/>
            <person name="Conn L."/>
            <person name="Conway A.B."/>
            <person name="Conway A.R."/>
            <person name="Creasy T.H."/>
            <person name="Dewar K."/>
            <person name="Dunn P."/>
            <person name="Etgu P."/>
            <person name="Feldblyum T.V."/>
            <person name="Feng J.-D."/>
            <person name="Fong B."/>
            <person name="Fujii C.Y."/>
            <person name="Gill J.E."/>
            <person name="Goldsmith A.D."/>
            <person name="Haas B."/>
            <person name="Hansen N.F."/>
            <person name="Hughes B."/>
            <person name="Huizar L."/>
            <person name="Hunter J.L."/>
            <person name="Jenkins J."/>
            <person name="Johnson-Hopson C."/>
            <person name="Khan S."/>
            <person name="Khaykin E."/>
            <person name="Kim C.J."/>
            <person name="Koo H.L."/>
            <person name="Kremenetskaia I."/>
            <person name="Kurtz D.B."/>
            <person name="Kwan A."/>
            <person name="Lam B."/>
            <person name="Langin-Hooper S."/>
            <person name="Lee A."/>
            <person name="Lee J.M."/>
            <person name="Lenz C.A."/>
            <person name="Li J.H."/>
            <person name="Li Y.-P."/>
            <person name="Lin X."/>
            <person name="Liu S.X."/>
            <person name="Liu Z.A."/>
            <person name="Luros J.S."/>
            <person name="Maiti R."/>
            <person name="Marziali A."/>
            <person name="Militscher J."/>
            <person name="Miranda M."/>
            <person name="Nguyen M."/>
            <person name="Nierman W.C."/>
            <person name="Osborne B.I."/>
            <person name="Pai G."/>
            <person name="Peterson J."/>
            <person name="Pham P.K."/>
            <person name="Rizzo M."/>
            <person name="Rooney T."/>
            <person name="Rowley D."/>
            <person name="Sakano H."/>
            <person name="Salzberg S.L."/>
            <person name="Schwartz J.R."/>
            <person name="Shinn P."/>
            <person name="Southwick A.M."/>
            <person name="Sun H."/>
            <person name="Tallon L.J."/>
            <person name="Tambunga G."/>
            <person name="Toriumi M.J."/>
            <person name="Town C.D."/>
            <person name="Utterback T."/>
            <person name="Van Aken S."/>
            <person name="Vaysberg M."/>
            <person name="Vysotskaia V.S."/>
            <person name="Walker M."/>
            <person name="Wu D."/>
            <person name="Yu G."/>
            <person name="Fraser C.M."/>
            <person name="Venter J.C."/>
            <person name="Davis R.W."/>
        </authorList>
    </citation>
    <scope>NUCLEOTIDE SEQUENCE [LARGE SCALE GENOMIC DNA]</scope>
    <source>
        <strain>cv. Columbia</strain>
    </source>
</reference>
<reference key="2">
    <citation type="journal article" date="2017" name="Plant J.">
        <title>Araport11: a complete reannotation of the Arabidopsis thaliana reference genome.</title>
        <authorList>
            <person name="Cheng C.Y."/>
            <person name="Krishnakumar V."/>
            <person name="Chan A.P."/>
            <person name="Thibaud-Nissen F."/>
            <person name="Schobel S."/>
            <person name="Town C.D."/>
        </authorList>
    </citation>
    <scope>GENOME REANNOTATION</scope>
    <source>
        <strain>cv. Columbia</strain>
    </source>
</reference>
<reference key="3">
    <citation type="journal article" date="2004" name="Genome Res.">
        <title>Whole genome sequence comparisons and 'full-length' cDNA sequences: a combined approach to evaluate and improve Arabidopsis genome annotation.</title>
        <authorList>
            <person name="Castelli V."/>
            <person name="Aury J.-M."/>
            <person name="Jaillon O."/>
            <person name="Wincker P."/>
            <person name="Clepet C."/>
            <person name="Menard M."/>
            <person name="Cruaud C."/>
            <person name="Quetier F."/>
            <person name="Scarpelli C."/>
            <person name="Schaechter V."/>
            <person name="Temple G."/>
            <person name="Caboche M."/>
            <person name="Weissenbach J."/>
            <person name="Salanoubat M."/>
        </authorList>
    </citation>
    <scope>NUCLEOTIDE SEQUENCE [LARGE SCALE MRNA] OF 728-856</scope>
    <source>
        <strain>cv. Columbia</strain>
    </source>
</reference>
<reference key="4">
    <citation type="journal article" date="2003" name="Microbiol. Mol. Biol. Rev.">
        <title>Two families of mechanosensitive channel proteins.</title>
        <authorList>
            <person name="Pivetti C.D."/>
            <person name="Yen M.R."/>
            <person name="Miller S."/>
            <person name="Busch W."/>
            <person name="Tseng Y.H."/>
            <person name="Booth I.R."/>
            <person name="Saier M.H. Jr."/>
        </authorList>
    </citation>
    <scope>GENE FAMILY</scope>
</reference>
<reference key="5">
    <citation type="journal article" date="2003" name="Mol. Cell. Proteomics">
        <title>Large-scale analysis of in vivo phosphorylated membrane proteins by immobilized metal ion affinity chromatography and mass spectrometry.</title>
        <authorList>
            <person name="Nuehse T.S."/>
            <person name="Stensballe A."/>
            <person name="Jensen O.N."/>
            <person name="Peck S.C."/>
        </authorList>
    </citation>
    <scope>PHOSPHORYLATION [LARGE SCALE ANALYSIS] AT SER-462</scope>
    <scope>IDENTIFICATION BY MASS SPECTROMETRY [LARGE SCALE ANALYSIS]</scope>
    <source>
        <strain>cv. La-0</strain>
    </source>
</reference>
<reference key="6">
    <citation type="journal article" date="2004" name="Plant Cell">
        <title>Phosphoproteomics of the Arabidopsis plasma membrane and a new phosphorylation site database.</title>
        <authorList>
            <person name="Nuehse T.S."/>
            <person name="Stensballe A."/>
            <person name="Jensen O.N."/>
            <person name="Peck S.C."/>
        </authorList>
    </citation>
    <scope>IDENTIFICATION BY MASS SPECTROMETRY [LARGE SCALE ANALYSIS]</scope>
</reference>
<reference key="7">
    <citation type="book" date="2007" name="Mechanosensitive Ion Channels, Part A">
        <title>MscS-like proteins in plants.</title>
        <editorList>
            <person name="Hamill O.P."/>
        </editorList>
        <authorList>
            <person name="Haswell E.S."/>
        </authorList>
    </citation>
    <scope>REVIEW</scope>
    <scope>GENE FAMILY</scope>
    <scope>NOMENCLATURE</scope>
</reference>